<keyword id="KW-0560">Oxidoreductase</keyword>
<keyword id="KW-0884">PQQ biosynthesis</keyword>
<keyword id="KW-1185">Reference proteome</keyword>
<evidence type="ECO:0000255" key="1">
    <source>
        <dbReference type="HAMAP-Rule" id="MF_00654"/>
    </source>
</evidence>
<organism>
    <name type="scientific">Cereibacter sphaeroides (strain ATCC 17023 / DSM 158 / JCM 6121 / CCUG 31486 / LMG 2827 / NBRC 12203 / NCIMB 8253 / ATH 2.4.1.)</name>
    <name type="common">Rhodobacter sphaeroides</name>
    <dbReference type="NCBI Taxonomy" id="272943"/>
    <lineage>
        <taxon>Bacteria</taxon>
        <taxon>Pseudomonadati</taxon>
        <taxon>Pseudomonadota</taxon>
        <taxon>Alphaproteobacteria</taxon>
        <taxon>Rhodobacterales</taxon>
        <taxon>Paracoccaceae</taxon>
        <taxon>Cereibacter</taxon>
    </lineage>
</organism>
<accession>Q3IZR5</accession>
<sequence length="255" mass="29104">MSLDLSTSLSPARPLESADAMEERLREIGAARYHDRHPFHHMLHGGELTKGQVQAWALNRYYYQCTIPVKDAVVISRFRDRATRIEWRHRLEDHDGAEGAEGGIDRWLILTDGLGLDRAYVESTEGILPATRFAVEAYVHFVRDRSPLEAIASCLTELFAPNIHATRISGMLSHYDFINPTVMAYFQRRLTQAPRDADYALRYVRDHARTPEERAAVCNALIFKTQVLWTQLDALHHAYVLGHVPPGAFVPEEMR</sequence>
<name>PQQC_CERS4</name>
<proteinExistence type="inferred from homology"/>
<gene>
    <name evidence="1" type="primary">pqqC</name>
    <name type="ordered locus">RHOS4_24010</name>
    <name type="ORF">RSP_0792</name>
</gene>
<dbReference type="EC" id="1.3.3.11" evidence="1"/>
<dbReference type="EMBL" id="CP000143">
    <property type="protein sequence ID" value="ABA79969.1"/>
    <property type="molecule type" value="Genomic_DNA"/>
</dbReference>
<dbReference type="RefSeq" id="WP_011338492.1">
    <property type="nucleotide sequence ID" value="NC_007493.2"/>
</dbReference>
<dbReference type="RefSeq" id="YP_353870.1">
    <property type="nucleotide sequence ID" value="NC_007493.2"/>
</dbReference>
<dbReference type="SMR" id="Q3IZR5"/>
<dbReference type="STRING" id="272943.RSP_0792"/>
<dbReference type="EnsemblBacteria" id="ABA79969">
    <property type="protein sequence ID" value="ABA79969"/>
    <property type="gene ID" value="RSP_0792"/>
</dbReference>
<dbReference type="GeneID" id="3718408"/>
<dbReference type="KEGG" id="rsp:RSP_0792"/>
<dbReference type="PATRIC" id="fig|272943.9.peg.2750"/>
<dbReference type="eggNOG" id="COG5424">
    <property type="taxonomic scope" value="Bacteria"/>
</dbReference>
<dbReference type="OrthoDB" id="9800756at2"/>
<dbReference type="PhylomeDB" id="Q3IZR5"/>
<dbReference type="UniPathway" id="UPA00539"/>
<dbReference type="Proteomes" id="UP000002703">
    <property type="component" value="Chromosome 1"/>
</dbReference>
<dbReference type="GO" id="GO:0033732">
    <property type="term" value="F:pyrroloquinoline-quinone synthase activity"/>
    <property type="evidence" value="ECO:0007669"/>
    <property type="project" value="UniProtKB-EC"/>
</dbReference>
<dbReference type="GO" id="GO:0018189">
    <property type="term" value="P:pyrroloquinoline quinone biosynthetic process"/>
    <property type="evidence" value="ECO:0007669"/>
    <property type="project" value="UniProtKB-UniRule"/>
</dbReference>
<dbReference type="GO" id="GO:0006790">
    <property type="term" value="P:sulfur compound metabolic process"/>
    <property type="evidence" value="ECO:0007669"/>
    <property type="project" value="UniProtKB-ARBA"/>
</dbReference>
<dbReference type="Gene3D" id="1.20.910.10">
    <property type="entry name" value="Heme oxygenase-like"/>
    <property type="match status" value="1"/>
</dbReference>
<dbReference type="HAMAP" id="MF_00654">
    <property type="entry name" value="PQQ_syn_PqqC"/>
    <property type="match status" value="1"/>
</dbReference>
<dbReference type="InterPro" id="IPR016084">
    <property type="entry name" value="Haem_Oase-like_multi-hlx"/>
</dbReference>
<dbReference type="InterPro" id="IPR011845">
    <property type="entry name" value="PqqC"/>
</dbReference>
<dbReference type="InterPro" id="IPR039068">
    <property type="entry name" value="PqqC-like"/>
</dbReference>
<dbReference type="InterPro" id="IPR004305">
    <property type="entry name" value="Thiaminase-2/PQQC"/>
</dbReference>
<dbReference type="NCBIfam" id="TIGR02111">
    <property type="entry name" value="PQQ_syn_pqqC"/>
    <property type="match status" value="1"/>
</dbReference>
<dbReference type="PANTHER" id="PTHR40279:SF3">
    <property type="entry name" value="4-AMINOBENZOATE SYNTHASE"/>
    <property type="match status" value="1"/>
</dbReference>
<dbReference type="PANTHER" id="PTHR40279">
    <property type="entry name" value="PQQC-LIKE PROTEIN"/>
    <property type="match status" value="1"/>
</dbReference>
<dbReference type="Pfam" id="PF03070">
    <property type="entry name" value="TENA_THI-4"/>
    <property type="match status" value="1"/>
</dbReference>
<dbReference type="SUPFAM" id="SSF48613">
    <property type="entry name" value="Heme oxygenase-like"/>
    <property type="match status" value="1"/>
</dbReference>
<reference key="1">
    <citation type="submission" date="2005-09" db="EMBL/GenBank/DDBJ databases">
        <title>Complete sequence of chromosome 1 of Rhodobacter sphaeroides 2.4.1.</title>
        <authorList>
            <person name="Copeland A."/>
            <person name="Lucas S."/>
            <person name="Lapidus A."/>
            <person name="Barry K."/>
            <person name="Detter J.C."/>
            <person name="Glavina T."/>
            <person name="Hammon N."/>
            <person name="Israni S."/>
            <person name="Pitluck S."/>
            <person name="Richardson P."/>
            <person name="Mackenzie C."/>
            <person name="Choudhary M."/>
            <person name="Larimer F."/>
            <person name="Hauser L.J."/>
            <person name="Land M."/>
            <person name="Donohue T.J."/>
            <person name="Kaplan S."/>
        </authorList>
    </citation>
    <scope>NUCLEOTIDE SEQUENCE [LARGE SCALE GENOMIC DNA]</scope>
    <source>
        <strain>ATCC 17023 / DSM 158 / JCM 6121 / CCUG 31486 / LMG 2827 / NBRC 12203 / NCIMB 8253 / ATH 2.4.1.</strain>
    </source>
</reference>
<feature type="chain" id="PRO_1000061678" description="Pyrroloquinoline-quinone synthase">
    <location>
        <begin position="1"/>
        <end position="255"/>
    </location>
</feature>
<comment type="function">
    <text evidence="1">Ring cyclization and eight-electron oxidation of 3a-(2-amino-2-carboxyethyl)-4,5-dioxo-4,5,6,7,8,9-hexahydroquinoline-7,9-dicarboxylic-acid to PQQ.</text>
</comment>
<comment type="catalytic activity">
    <reaction evidence="1">
        <text>6-(2-amino-2-carboxyethyl)-7,8-dioxo-1,2,3,4,7,8-hexahydroquinoline-2,4-dicarboxylate + 3 O2 = pyrroloquinoline quinone + 2 H2O2 + 2 H2O + H(+)</text>
        <dbReference type="Rhea" id="RHEA:10692"/>
        <dbReference type="ChEBI" id="CHEBI:15377"/>
        <dbReference type="ChEBI" id="CHEBI:15378"/>
        <dbReference type="ChEBI" id="CHEBI:15379"/>
        <dbReference type="ChEBI" id="CHEBI:16240"/>
        <dbReference type="ChEBI" id="CHEBI:58442"/>
        <dbReference type="ChEBI" id="CHEBI:58778"/>
        <dbReference type="EC" id="1.3.3.11"/>
    </reaction>
</comment>
<comment type="pathway">
    <text evidence="1">Cofactor biosynthesis; pyrroloquinoline quinone biosynthesis.</text>
</comment>
<comment type="similarity">
    <text evidence="1">Belongs to the PqqC family.</text>
</comment>
<protein>
    <recommendedName>
        <fullName evidence="1">Pyrroloquinoline-quinone synthase</fullName>
        <ecNumber evidence="1">1.3.3.11</ecNumber>
    </recommendedName>
    <alternativeName>
        <fullName evidence="1">Coenzyme PQQ synthesis protein C</fullName>
    </alternativeName>
    <alternativeName>
        <fullName evidence="1">Pyrroloquinoline quinone biosynthesis protein C</fullName>
    </alternativeName>
</protein>